<evidence type="ECO:0000269" key="1">
    <source>
    </source>
</evidence>
<evidence type="ECO:0007744" key="2">
    <source>
    </source>
</evidence>
<sequence>MSSALYKQSTNFTHSTGSFLQSAPVELTTVSGYQEFLKKQEKKNYEIQTVLSEDKSHGYVLKDGEVIANIIGEAKDYLLDLAGQA</sequence>
<comment type="subcellular location">
    <subcellularLocation>
        <location evidence="1">Cytoplasm</location>
    </subcellularLocation>
    <subcellularLocation>
        <location evidence="1">Nucleus</location>
    </subcellularLocation>
</comment>
<protein>
    <recommendedName>
        <fullName>Uncharacterized protein YBR085C-A</fullName>
    </recommendedName>
</protein>
<keyword id="KW-0963">Cytoplasm</keyword>
<keyword id="KW-0539">Nucleus</keyword>
<keyword id="KW-0597">Phosphoprotein</keyword>
<keyword id="KW-1185">Reference proteome</keyword>
<dbReference type="EMBL" id="Z35955">
    <property type="protein sequence ID" value="CAA85035.1"/>
    <property type="molecule type" value="Genomic_DNA"/>
</dbReference>
<dbReference type="EMBL" id="Z35954">
    <property type="protein sequence ID" value="CAA85033.1"/>
    <property type="molecule type" value="Genomic_DNA"/>
</dbReference>
<dbReference type="EMBL" id="BK006936">
    <property type="protein sequence ID" value="DAA07206.1"/>
    <property type="molecule type" value="Genomic_DNA"/>
</dbReference>
<dbReference type="PIR" id="S78707">
    <property type="entry name" value="S78707"/>
</dbReference>
<dbReference type="RefSeq" id="NP_061491.1">
    <property type="nucleotide sequence ID" value="NM_001184443.1"/>
</dbReference>
<dbReference type="BioGRID" id="32791">
    <property type="interactions" value="24"/>
</dbReference>
<dbReference type="FunCoup" id="O43137">
    <property type="interactions" value="102"/>
</dbReference>
<dbReference type="IntAct" id="O43137">
    <property type="interactions" value="2"/>
</dbReference>
<dbReference type="MINT" id="O43137"/>
<dbReference type="STRING" id="4932.YBR085C-A"/>
<dbReference type="iPTMnet" id="O43137"/>
<dbReference type="PaxDb" id="4932-YBR085C-A"/>
<dbReference type="PeptideAtlas" id="O43137"/>
<dbReference type="TopDownProteomics" id="O43137"/>
<dbReference type="EnsemblFungi" id="YBR085C-A_mRNA">
    <property type="protein sequence ID" value="YBR085C-A"/>
    <property type="gene ID" value="YBR085C-A"/>
</dbReference>
<dbReference type="GeneID" id="852381"/>
<dbReference type="KEGG" id="sce:YBR085C-A"/>
<dbReference type="AGR" id="SGD:S000007522"/>
<dbReference type="SGD" id="S000007522">
    <property type="gene designation" value="YBR085C-A"/>
</dbReference>
<dbReference type="VEuPathDB" id="FungiDB:YBR085C-A"/>
<dbReference type="eggNOG" id="ENOG502S7IR">
    <property type="taxonomic scope" value="Eukaryota"/>
</dbReference>
<dbReference type="HOGENOM" id="CLU_2484906_0_0_1"/>
<dbReference type="InParanoid" id="O43137"/>
<dbReference type="OMA" id="YKQSTNF"/>
<dbReference type="OrthoDB" id="3978317at2759"/>
<dbReference type="BioCyc" id="YEAST:G3O-29250-MONOMER"/>
<dbReference type="BioGRID-ORCS" id="852381">
    <property type="hits" value="0 hits in 10 CRISPR screens"/>
</dbReference>
<dbReference type="PRO" id="PR:O43137"/>
<dbReference type="Proteomes" id="UP000002311">
    <property type="component" value="Chromosome II"/>
</dbReference>
<dbReference type="RNAct" id="O43137">
    <property type="molecule type" value="protein"/>
</dbReference>
<dbReference type="GO" id="GO:0005737">
    <property type="term" value="C:cytoplasm"/>
    <property type="evidence" value="ECO:0007005"/>
    <property type="project" value="SGD"/>
</dbReference>
<dbReference type="GO" id="GO:0005634">
    <property type="term" value="C:nucleus"/>
    <property type="evidence" value="ECO:0007005"/>
    <property type="project" value="SGD"/>
</dbReference>
<gene>
    <name type="ordered locus">YBR085C-A</name>
</gene>
<reference key="1">
    <citation type="journal article" date="1994" name="EMBO J.">
        <title>Complete DNA sequence of yeast chromosome II.</title>
        <authorList>
            <person name="Feldmann H."/>
            <person name="Aigle M."/>
            <person name="Aljinovic G."/>
            <person name="Andre B."/>
            <person name="Baclet M.C."/>
            <person name="Barthe C."/>
            <person name="Baur A."/>
            <person name="Becam A.-M."/>
            <person name="Biteau N."/>
            <person name="Boles E."/>
            <person name="Brandt T."/>
            <person name="Brendel M."/>
            <person name="Brueckner M."/>
            <person name="Bussereau F."/>
            <person name="Christiansen C."/>
            <person name="Contreras R."/>
            <person name="Crouzet M."/>
            <person name="Cziepluch C."/>
            <person name="Demolis N."/>
            <person name="Delaveau T."/>
            <person name="Doignon F."/>
            <person name="Domdey H."/>
            <person name="Duesterhus S."/>
            <person name="Dubois E."/>
            <person name="Dujon B."/>
            <person name="El Bakkoury M."/>
            <person name="Entian K.-D."/>
            <person name="Feuermann M."/>
            <person name="Fiers W."/>
            <person name="Fobo G.M."/>
            <person name="Fritz C."/>
            <person name="Gassenhuber J."/>
            <person name="Glansdorff N."/>
            <person name="Goffeau A."/>
            <person name="Grivell L.A."/>
            <person name="de Haan M."/>
            <person name="Hein C."/>
            <person name="Herbert C.J."/>
            <person name="Hollenberg C.P."/>
            <person name="Holmstroem K."/>
            <person name="Jacq C."/>
            <person name="Jacquet M."/>
            <person name="Jauniaux J.-C."/>
            <person name="Jonniaux J.-L."/>
            <person name="Kallesoee T."/>
            <person name="Kiesau P."/>
            <person name="Kirchrath L."/>
            <person name="Koetter P."/>
            <person name="Korol S."/>
            <person name="Liebl S."/>
            <person name="Logghe M."/>
            <person name="Lohan A.J.E."/>
            <person name="Louis E.J."/>
            <person name="Li Z.Y."/>
            <person name="Maat M.J."/>
            <person name="Mallet L."/>
            <person name="Mannhaupt G."/>
            <person name="Messenguy F."/>
            <person name="Miosga T."/>
            <person name="Molemans F."/>
            <person name="Mueller S."/>
            <person name="Nasr F."/>
            <person name="Obermaier B."/>
            <person name="Perea J."/>
            <person name="Pierard A."/>
            <person name="Piravandi E."/>
            <person name="Pohl F.M."/>
            <person name="Pohl T.M."/>
            <person name="Potier S."/>
            <person name="Proft M."/>
            <person name="Purnelle B."/>
            <person name="Ramezani Rad M."/>
            <person name="Rieger M."/>
            <person name="Rose M."/>
            <person name="Schaaff-Gerstenschlaeger I."/>
            <person name="Scherens B."/>
            <person name="Schwarzlose C."/>
            <person name="Skala J."/>
            <person name="Slonimski P.P."/>
            <person name="Smits P.H.M."/>
            <person name="Souciet J.-L."/>
            <person name="Steensma H.Y."/>
            <person name="Stucka R."/>
            <person name="Urrestarazu L.A."/>
            <person name="van der Aart Q.J.M."/>
            <person name="Van Dyck L."/>
            <person name="Vassarotti A."/>
            <person name="Vetter I."/>
            <person name="Vierendeels F."/>
            <person name="Vissers S."/>
            <person name="Wagner G."/>
            <person name="de Wergifosse P."/>
            <person name="Wolfe K.H."/>
            <person name="Zagulski M."/>
            <person name="Zimmermann F.K."/>
            <person name="Mewes H.-W."/>
            <person name="Kleine K."/>
        </authorList>
    </citation>
    <scope>NUCLEOTIDE SEQUENCE [LARGE SCALE GENOMIC DNA]</scope>
    <source>
        <strain>ATCC 204508 / S288c</strain>
    </source>
</reference>
<reference key="2">
    <citation type="journal article" date="2014" name="G3 (Bethesda)">
        <title>The reference genome sequence of Saccharomyces cerevisiae: Then and now.</title>
        <authorList>
            <person name="Engel S.R."/>
            <person name="Dietrich F.S."/>
            <person name="Fisk D.G."/>
            <person name="Binkley G."/>
            <person name="Balakrishnan R."/>
            <person name="Costanzo M.C."/>
            <person name="Dwight S.S."/>
            <person name="Hitz B.C."/>
            <person name="Karra K."/>
            <person name="Nash R.S."/>
            <person name="Weng S."/>
            <person name="Wong E.D."/>
            <person name="Lloyd P."/>
            <person name="Skrzypek M.S."/>
            <person name="Miyasato S.R."/>
            <person name="Simison M."/>
            <person name="Cherry J.M."/>
        </authorList>
    </citation>
    <scope>GENOME REANNOTATION</scope>
    <source>
        <strain>ATCC 204508 / S288c</strain>
    </source>
</reference>
<reference key="3">
    <citation type="journal article" date="1997" name="Nucleic Acids Res.">
        <title>Analysis of the yeast genome: identification of new non-coding and small ORF-containing RNAs.</title>
        <authorList>
            <person name="Olivas W.M."/>
            <person name="Muhlrad D."/>
            <person name="Parker R."/>
        </authorList>
    </citation>
    <scope>GENOME REANNOTATION</scope>
</reference>
<reference key="4">
    <citation type="journal article" date="2003" name="Nature">
        <title>Global analysis of protein localization in budding yeast.</title>
        <authorList>
            <person name="Huh W.-K."/>
            <person name="Falvo J.V."/>
            <person name="Gerke L.C."/>
            <person name="Carroll A.S."/>
            <person name="Howson R.W."/>
            <person name="Weissman J.S."/>
            <person name="O'Shea E.K."/>
        </authorList>
    </citation>
    <scope>SUBCELLULAR LOCATION [LARGE SCALE ANALYSIS]</scope>
</reference>
<reference key="5">
    <citation type="journal article" date="2005" name="Mol. Cell. Proteomics">
        <title>Quantitative phosphoproteomics applied to the yeast pheromone signaling pathway.</title>
        <authorList>
            <person name="Gruhler A."/>
            <person name="Olsen J.V."/>
            <person name="Mohammed S."/>
            <person name="Mortensen P."/>
            <person name="Faergeman N.J."/>
            <person name="Mann M."/>
            <person name="Jensen O.N."/>
        </authorList>
    </citation>
    <scope>IDENTIFICATION BY MASS SPECTROMETRY [LARGE SCALE ANALYSIS]</scope>
    <source>
        <strain>YAL6B</strain>
    </source>
</reference>
<reference key="6">
    <citation type="journal article" date="2008" name="Mol. Cell. Proteomics">
        <title>A multidimensional chromatography technology for in-depth phosphoproteome analysis.</title>
        <authorList>
            <person name="Albuquerque C.P."/>
            <person name="Smolka M.B."/>
            <person name="Payne S.H."/>
            <person name="Bafna V."/>
            <person name="Eng J."/>
            <person name="Zhou H."/>
        </authorList>
    </citation>
    <scope>IDENTIFICATION BY MASS SPECTROMETRY [LARGE SCALE ANALYSIS]</scope>
</reference>
<reference key="7">
    <citation type="journal article" date="2009" name="Science">
        <title>Global analysis of Cdk1 substrate phosphorylation sites provides insights into evolution.</title>
        <authorList>
            <person name="Holt L.J."/>
            <person name="Tuch B.B."/>
            <person name="Villen J."/>
            <person name="Johnson A.D."/>
            <person name="Gygi S.P."/>
            <person name="Morgan D.O."/>
        </authorList>
    </citation>
    <scope>PHOSPHORYLATION [LARGE SCALE ANALYSIS] AT SER-22</scope>
    <scope>IDENTIFICATION BY MASS SPECTROMETRY [LARGE SCALE ANALYSIS]</scope>
</reference>
<name>YB085_YEAST</name>
<feature type="chain" id="PRO_0000248436" description="Uncharacterized protein YBR085C-A">
    <location>
        <begin position="1"/>
        <end position="85"/>
    </location>
</feature>
<feature type="modified residue" description="Phosphoserine" evidence="2">
    <location>
        <position position="22"/>
    </location>
</feature>
<organism>
    <name type="scientific">Saccharomyces cerevisiae (strain ATCC 204508 / S288c)</name>
    <name type="common">Baker's yeast</name>
    <dbReference type="NCBI Taxonomy" id="559292"/>
    <lineage>
        <taxon>Eukaryota</taxon>
        <taxon>Fungi</taxon>
        <taxon>Dikarya</taxon>
        <taxon>Ascomycota</taxon>
        <taxon>Saccharomycotina</taxon>
        <taxon>Saccharomycetes</taxon>
        <taxon>Saccharomycetales</taxon>
        <taxon>Saccharomycetaceae</taxon>
        <taxon>Saccharomyces</taxon>
    </lineage>
</organism>
<accession>O43137</accession>
<accession>D6VQ86</accession>
<proteinExistence type="evidence at protein level"/>